<comment type="function">
    <text evidence="1">Catalyzes the attachment of glutamate to tRNA(Glu) in a two-step reaction: glutamate is first activated by ATP to form Glu-AMP and then transferred to the acceptor end of tRNA(Glu).</text>
</comment>
<comment type="catalytic activity">
    <reaction evidence="1">
        <text>tRNA(Glu) + L-glutamate + ATP = L-glutamyl-tRNA(Glu) + AMP + diphosphate</text>
        <dbReference type="Rhea" id="RHEA:23540"/>
        <dbReference type="Rhea" id="RHEA-COMP:9663"/>
        <dbReference type="Rhea" id="RHEA-COMP:9680"/>
        <dbReference type="ChEBI" id="CHEBI:29985"/>
        <dbReference type="ChEBI" id="CHEBI:30616"/>
        <dbReference type="ChEBI" id="CHEBI:33019"/>
        <dbReference type="ChEBI" id="CHEBI:78442"/>
        <dbReference type="ChEBI" id="CHEBI:78520"/>
        <dbReference type="ChEBI" id="CHEBI:456215"/>
        <dbReference type="EC" id="6.1.1.17"/>
    </reaction>
</comment>
<comment type="subunit">
    <text evidence="1">Monomer.</text>
</comment>
<comment type="subcellular location">
    <subcellularLocation>
        <location evidence="1">Cytoplasm</location>
    </subcellularLocation>
</comment>
<comment type="similarity">
    <text evidence="1">Belongs to the class-I aminoacyl-tRNA synthetase family. Glutamate--tRNA ligase type 1 subfamily.</text>
</comment>
<dbReference type="EC" id="6.1.1.17" evidence="1"/>
<dbReference type="EMBL" id="BX571856">
    <property type="protein sequence ID" value="CAG39553.1"/>
    <property type="molecule type" value="Genomic_DNA"/>
</dbReference>
<dbReference type="RefSeq" id="WP_001283787.1">
    <property type="nucleotide sequence ID" value="NC_002952.2"/>
</dbReference>
<dbReference type="SMR" id="Q6GJE1"/>
<dbReference type="KEGG" id="sar:SAR0531"/>
<dbReference type="HOGENOM" id="CLU_015768_6_1_9"/>
<dbReference type="Proteomes" id="UP000000596">
    <property type="component" value="Chromosome"/>
</dbReference>
<dbReference type="GO" id="GO:0005829">
    <property type="term" value="C:cytosol"/>
    <property type="evidence" value="ECO:0007669"/>
    <property type="project" value="TreeGrafter"/>
</dbReference>
<dbReference type="GO" id="GO:0005524">
    <property type="term" value="F:ATP binding"/>
    <property type="evidence" value="ECO:0007669"/>
    <property type="project" value="UniProtKB-UniRule"/>
</dbReference>
<dbReference type="GO" id="GO:0004818">
    <property type="term" value="F:glutamate-tRNA ligase activity"/>
    <property type="evidence" value="ECO:0007669"/>
    <property type="project" value="UniProtKB-UniRule"/>
</dbReference>
<dbReference type="GO" id="GO:0000049">
    <property type="term" value="F:tRNA binding"/>
    <property type="evidence" value="ECO:0007669"/>
    <property type="project" value="InterPro"/>
</dbReference>
<dbReference type="GO" id="GO:0008270">
    <property type="term" value="F:zinc ion binding"/>
    <property type="evidence" value="ECO:0007669"/>
    <property type="project" value="InterPro"/>
</dbReference>
<dbReference type="GO" id="GO:0006424">
    <property type="term" value="P:glutamyl-tRNA aminoacylation"/>
    <property type="evidence" value="ECO:0007669"/>
    <property type="project" value="UniProtKB-UniRule"/>
</dbReference>
<dbReference type="CDD" id="cd00808">
    <property type="entry name" value="GluRS_core"/>
    <property type="match status" value="1"/>
</dbReference>
<dbReference type="FunFam" id="1.10.10.350:FF:000002">
    <property type="entry name" value="Glutamate--tRNA ligase"/>
    <property type="match status" value="1"/>
</dbReference>
<dbReference type="FunFam" id="3.40.50.620:FF:000007">
    <property type="entry name" value="Glutamate--tRNA ligase"/>
    <property type="match status" value="1"/>
</dbReference>
<dbReference type="Gene3D" id="1.10.10.350">
    <property type="match status" value="1"/>
</dbReference>
<dbReference type="Gene3D" id="3.40.50.620">
    <property type="entry name" value="HUPs"/>
    <property type="match status" value="1"/>
</dbReference>
<dbReference type="HAMAP" id="MF_00022">
    <property type="entry name" value="Glu_tRNA_synth_type1"/>
    <property type="match status" value="1"/>
</dbReference>
<dbReference type="InterPro" id="IPR045462">
    <property type="entry name" value="aa-tRNA-synth_I_cd-bd"/>
</dbReference>
<dbReference type="InterPro" id="IPR020751">
    <property type="entry name" value="aa-tRNA-synth_I_codon-bd_sub2"/>
</dbReference>
<dbReference type="InterPro" id="IPR001412">
    <property type="entry name" value="aa-tRNA-synth_I_CS"/>
</dbReference>
<dbReference type="InterPro" id="IPR008925">
    <property type="entry name" value="aa_tRNA-synth_I_cd-bd_sf"/>
</dbReference>
<dbReference type="InterPro" id="IPR004527">
    <property type="entry name" value="Glu-tRNA-ligase_bac/mito"/>
</dbReference>
<dbReference type="InterPro" id="IPR000924">
    <property type="entry name" value="Glu/Gln-tRNA-synth"/>
</dbReference>
<dbReference type="InterPro" id="IPR020058">
    <property type="entry name" value="Glu/Gln-tRNA-synth_Ib_cat-dom"/>
</dbReference>
<dbReference type="InterPro" id="IPR049940">
    <property type="entry name" value="GluQ/Sye"/>
</dbReference>
<dbReference type="InterPro" id="IPR033910">
    <property type="entry name" value="GluRS_core"/>
</dbReference>
<dbReference type="InterPro" id="IPR014729">
    <property type="entry name" value="Rossmann-like_a/b/a_fold"/>
</dbReference>
<dbReference type="NCBIfam" id="TIGR00464">
    <property type="entry name" value="gltX_bact"/>
    <property type="match status" value="1"/>
</dbReference>
<dbReference type="PANTHER" id="PTHR43311">
    <property type="entry name" value="GLUTAMATE--TRNA LIGASE"/>
    <property type="match status" value="1"/>
</dbReference>
<dbReference type="PANTHER" id="PTHR43311:SF2">
    <property type="entry name" value="GLUTAMATE--TRNA LIGASE, MITOCHONDRIAL-RELATED"/>
    <property type="match status" value="1"/>
</dbReference>
<dbReference type="Pfam" id="PF19269">
    <property type="entry name" value="Anticodon_2"/>
    <property type="match status" value="1"/>
</dbReference>
<dbReference type="Pfam" id="PF00749">
    <property type="entry name" value="tRNA-synt_1c"/>
    <property type="match status" value="1"/>
</dbReference>
<dbReference type="PRINTS" id="PR00987">
    <property type="entry name" value="TRNASYNTHGLU"/>
</dbReference>
<dbReference type="SUPFAM" id="SSF48163">
    <property type="entry name" value="An anticodon-binding domain of class I aminoacyl-tRNA synthetases"/>
    <property type="match status" value="1"/>
</dbReference>
<dbReference type="SUPFAM" id="SSF52374">
    <property type="entry name" value="Nucleotidylyl transferase"/>
    <property type="match status" value="1"/>
</dbReference>
<dbReference type="PROSITE" id="PS00178">
    <property type="entry name" value="AA_TRNA_LIGASE_I"/>
    <property type="match status" value="1"/>
</dbReference>
<reference key="1">
    <citation type="journal article" date="2004" name="Proc. Natl. Acad. Sci. U.S.A.">
        <title>Complete genomes of two clinical Staphylococcus aureus strains: evidence for the rapid evolution of virulence and drug resistance.</title>
        <authorList>
            <person name="Holden M.T.G."/>
            <person name="Feil E.J."/>
            <person name="Lindsay J.A."/>
            <person name="Peacock S.J."/>
            <person name="Day N.P.J."/>
            <person name="Enright M.C."/>
            <person name="Foster T.J."/>
            <person name="Moore C.E."/>
            <person name="Hurst L."/>
            <person name="Atkin R."/>
            <person name="Barron A."/>
            <person name="Bason N."/>
            <person name="Bentley S.D."/>
            <person name="Chillingworth C."/>
            <person name="Chillingworth T."/>
            <person name="Churcher C."/>
            <person name="Clark L."/>
            <person name="Corton C."/>
            <person name="Cronin A."/>
            <person name="Doggett J."/>
            <person name="Dowd L."/>
            <person name="Feltwell T."/>
            <person name="Hance Z."/>
            <person name="Harris B."/>
            <person name="Hauser H."/>
            <person name="Holroyd S."/>
            <person name="Jagels K."/>
            <person name="James K.D."/>
            <person name="Lennard N."/>
            <person name="Line A."/>
            <person name="Mayes R."/>
            <person name="Moule S."/>
            <person name="Mungall K."/>
            <person name="Ormond D."/>
            <person name="Quail M.A."/>
            <person name="Rabbinowitsch E."/>
            <person name="Rutherford K.M."/>
            <person name="Sanders M."/>
            <person name="Sharp S."/>
            <person name="Simmonds M."/>
            <person name="Stevens K."/>
            <person name="Whitehead S."/>
            <person name="Barrell B.G."/>
            <person name="Spratt B.G."/>
            <person name="Parkhill J."/>
        </authorList>
    </citation>
    <scope>NUCLEOTIDE SEQUENCE [LARGE SCALE GENOMIC DNA]</scope>
    <source>
        <strain>MRSA252</strain>
    </source>
</reference>
<sequence length="484" mass="56290">MSDRIRVRYAPSPTGYLHIGNARTALFNYLYAKHYNGDFVIRIEDTDKKRNLEDGETSQFDNLKWLGLDWDESVDKDNGYGPYRQSERQHIYQPLIDQLLAEDKAYKCYMTEEELEAEREAQIARGEMPRYGGQHAHLTEEQRQQFEAEGRQPSIRFRVPQNQTYSFDDMVKGNISFDSNGIGDWVIVKKDGIPTYNFAVAIDDHYMEISDVIRGDDHISNTPKQIMIYEAFGWEPPRFGHMSLIVNEERKKLSKRDGQILQFIEQYRDLGYLPEALFNFIALLGWSPEGEEEIFSKEEFIKIFDEKRLSKSPAFFDKQKLAWVNNQYMKQKDTETVFQLALPHLIKANLIPEVPSEEDLSWGRKLIALYQKEMSYAGEIVPLSEMFFKEMPALGEEEQQVINGEQVPELMTHLFSKLEALEPFEAAEIKKTIKEVQKETGIKGKQLFMPIRVAVTGQMHGPELPNTIEVLGKEKVLNRLKQYK</sequence>
<organism>
    <name type="scientific">Staphylococcus aureus (strain MRSA252)</name>
    <dbReference type="NCBI Taxonomy" id="282458"/>
    <lineage>
        <taxon>Bacteria</taxon>
        <taxon>Bacillati</taxon>
        <taxon>Bacillota</taxon>
        <taxon>Bacilli</taxon>
        <taxon>Bacillales</taxon>
        <taxon>Staphylococcaceae</taxon>
        <taxon>Staphylococcus</taxon>
    </lineage>
</organism>
<feature type="chain" id="PRO_0000119654" description="Glutamate--tRNA ligase">
    <location>
        <begin position="1"/>
        <end position="484"/>
    </location>
</feature>
<feature type="short sequence motif" description="'HIGH' region" evidence="1">
    <location>
        <begin position="11"/>
        <end position="21"/>
    </location>
</feature>
<feature type="short sequence motif" description="'KMSKS' region" evidence="1">
    <location>
        <begin position="252"/>
        <end position="256"/>
    </location>
</feature>
<feature type="binding site" evidence="1">
    <location>
        <position position="255"/>
    </location>
    <ligand>
        <name>ATP</name>
        <dbReference type="ChEBI" id="CHEBI:30616"/>
    </ligand>
</feature>
<gene>
    <name evidence="1" type="primary">gltX</name>
    <name type="ordered locus">SAR0531</name>
</gene>
<accession>Q6GJE1</accession>
<keyword id="KW-0030">Aminoacyl-tRNA synthetase</keyword>
<keyword id="KW-0067">ATP-binding</keyword>
<keyword id="KW-0963">Cytoplasm</keyword>
<keyword id="KW-0436">Ligase</keyword>
<keyword id="KW-0547">Nucleotide-binding</keyword>
<keyword id="KW-0648">Protein biosynthesis</keyword>
<evidence type="ECO:0000255" key="1">
    <source>
        <dbReference type="HAMAP-Rule" id="MF_00022"/>
    </source>
</evidence>
<proteinExistence type="inferred from homology"/>
<protein>
    <recommendedName>
        <fullName evidence="1">Glutamate--tRNA ligase</fullName>
        <ecNumber evidence="1">6.1.1.17</ecNumber>
    </recommendedName>
    <alternativeName>
        <fullName evidence="1">Glutamyl-tRNA synthetase</fullName>
        <shortName evidence="1">GluRS</shortName>
    </alternativeName>
</protein>
<name>SYE_STAAR</name>